<organism>
    <name type="scientific">Ralstonia pickettii (strain 12J)</name>
    <dbReference type="NCBI Taxonomy" id="402626"/>
    <lineage>
        <taxon>Bacteria</taxon>
        <taxon>Pseudomonadati</taxon>
        <taxon>Pseudomonadota</taxon>
        <taxon>Betaproteobacteria</taxon>
        <taxon>Burkholderiales</taxon>
        <taxon>Burkholderiaceae</taxon>
        <taxon>Ralstonia</taxon>
    </lineage>
</organism>
<gene>
    <name evidence="1" type="primary">dnaE2</name>
    <name type="ordered locus">Rpic_4488</name>
</gene>
<sequence>MTSATPLPVLPDYAELHCISNFTFLTGASHPSELVERAKLYGYQALALTDECSVAGTARALVASKEHELKLIIGSRFTVRNADGEPWLRLVLLAQNIEGYGNLSEIITHARLAAPKGEYRLLADDLASPQGELAHLRGAPDCLAILLPDYDPDPQQLLAQAWWCQRVFGDRLSIALELPLRHADDRHRGTVLAVSEQIDVPMVATGGVQMHTRQRKPLHDVLTAIRLSKPLSECGLELAPSAEQAMRTRMQLAFLYQGEGGEKILRRTVELAALCNFSLDEIEYEYPSEVVPEGMTPAEYLRAETFAGAARRYPNGVSEKVHAQIEEELGLIAELGYEPFFLTVYDVVKFARNEGILCQGRGSAANSAVCYCLGITEVNPDSGNTLFARFLSRARNEPPDIDVDFEHQRREEVIQYIYKKYGVTRTALAAALITYRTRSALRDVGRALGIDLGIVEQVAKGQAWWDSRKEFAQRAGQQGLDPESPLVLRWAQLVDQLRGFPRHLSQHVGGFVIAQGKLSRLVPIENAAMENRRVIQWDKDDLESLRLLKVDVLALGMLTAIRRTLDMVDALPGRREHYGATAKLAMQNLPDDDTETYDMICRAETIGVFQIESRAQQSMLPRLRPREYYDLVIQVAIVRPGPIQGGMVHPYLQRREAKRNGNTDCVTYPGPEVKAVLERTLGVPIFQEQVMEIAMKAGDFTADDADRLRRDMAAWKRKGNLTQHQERLVHAMVVKRRYDPAFVEALCKQMEGFAEYGFPESHAAGFAKLAYVSSFLKCHEPAAFFAALLNSQPMGFYSPSQLVQEARRSHVRVLPADVTASVWDSTLHPRADGETGEDGLVQPDIRLGLNRIRGMRKPAAERIEAARAQAPFTSVEDLAHRAALDRHDLNVLAAANALKSLAGHRRQALWQTLALQEPGHDHALLRQARPVEAPLELPAPPIGEEVMADYGSLGLSLQSHPVELLRARLERMRFATAATLAGYRNGQLARACGIVTVRQRPGTANGTIFVSIEDETGAINVILWPHLIERQRREVLNAQLLGVYGKWQCERETRHLVAQHLVDLTPLLGRLATSSRDFH</sequence>
<dbReference type="EC" id="2.7.7.7" evidence="1"/>
<dbReference type="EMBL" id="CP001069">
    <property type="protein sequence ID" value="ACD29580.1"/>
    <property type="molecule type" value="Genomic_DNA"/>
</dbReference>
<dbReference type="SMR" id="B2UJ29"/>
<dbReference type="STRING" id="402626.Rpic_4488"/>
<dbReference type="KEGG" id="rpi:Rpic_4488"/>
<dbReference type="eggNOG" id="COG0587">
    <property type="taxonomic scope" value="Bacteria"/>
</dbReference>
<dbReference type="HOGENOM" id="CLU_001600_4_0_4"/>
<dbReference type="GO" id="GO:0005737">
    <property type="term" value="C:cytoplasm"/>
    <property type="evidence" value="ECO:0007669"/>
    <property type="project" value="UniProtKB-SubCell"/>
</dbReference>
<dbReference type="GO" id="GO:0008408">
    <property type="term" value="F:3'-5' exonuclease activity"/>
    <property type="evidence" value="ECO:0007669"/>
    <property type="project" value="InterPro"/>
</dbReference>
<dbReference type="GO" id="GO:0003887">
    <property type="term" value="F:DNA-directed DNA polymerase activity"/>
    <property type="evidence" value="ECO:0007669"/>
    <property type="project" value="UniProtKB-UniRule"/>
</dbReference>
<dbReference type="GO" id="GO:0003676">
    <property type="term" value="F:nucleic acid binding"/>
    <property type="evidence" value="ECO:0007669"/>
    <property type="project" value="InterPro"/>
</dbReference>
<dbReference type="GO" id="GO:0006281">
    <property type="term" value="P:DNA repair"/>
    <property type="evidence" value="ECO:0007669"/>
    <property type="project" value="UniProtKB-UniRule"/>
</dbReference>
<dbReference type="GO" id="GO:0006260">
    <property type="term" value="P:DNA replication"/>
    <property type="evidence" value="ECO:0007669"/>
    <property type="project" value="UniProtKB-KW"/>
</dbReference>
<dbReference type="CDD" id="cd04485">
    <property type="entry name" value="DnaE_OBF"/>
    <property type="match status" value="1"/>
</dbReference>
<dbReference type="CDD" id="cd07434">
    <property type="entry name" value="PHP_PolIIIA_DnaE2"/>
    <property type="match status" value="1"/>
</dbReference>
<dbReference type="Gene3D" id="1.10.150.870">
    <property type="match status" value="1"/>
</dbReference>
<dbReference type="Gene3D" id="3.20.20.140">
    <property type="entry name" value="Metal-dependent hydrolases"/>
    <property type="match status" value="1"/>
</dbReference>
<dbReference type="HAMAP" id="MF_01902">
    <property type="entry name" value="DNApol_error_prone"/>
    <property type="match status" value="1"/>
</dbReference>
<dbReference type="InterPro" id="IPR011708">
    <property type="entry name" value="DNA_pol3_alpha_NTPase_dom"/>
</dbReference>
<dbReference type="InterPro" id="IPR040982">
    <property type="entry name" value="DNA_pol3_finger"/>
</dbReference>
<dbReference type="InterPro" id="IPR023073">
    <property type="entry name" value="DnaE2"/>
</dbReference>
<dbReference type="InterPro" id="IPR004805">
    <property type="entry name" value="DnaE2/DnaE/PolC"/>
</dbReference>
<dbReference type="InterPro" id="IPR029460">
    <property type="entry name" value="DNAPol_HHH"/>
</dbReference>
<dbReference type="InterPro" id="IPR004365">
    <property type="entry name" value="NA-bd_OB_tRNA"/>
</dbReference>
<dbReference type="InterPro" id="IPR004013">
    <property type="entry name" value="PHP_dom"/>
</dbReference>
<dbReference type="InterPro" id="IPR003141">
    <property type="entry name" value="Pol/His_phosphatase_N"/>
</dbReference>
<dbReference type="InterPro" id="IPR016195">
    <property type="entry name" value="Pol/histidinol_Pase-like"/>
</dbReference>
<dbReference type="NCBIfam" id="TIGR00594">
    <property type="entry name" value="polc"/>
    <property type="match status" value="1"/>
</dbReference>
<dbReference type="NCBIfam" id="NF004225">
    <property type="entry name" value="PRK05672.1"/>
    <property type="match status" value="1"/>
</dbReference>
<dbReference type="PANTHER" id="PTHR32294">
    <property type="entry name" value="DNA POLYMERASE III SUBUNIT ALPHA"/>
    <property type="match status" value="1"/>
</dbReference>
<dbReference type="PANTHER" id="PTHR32294:SF4">
    <property type="entry name" value="ERROR-PRONE DNA POLYMERASE"/>
    <property type="match status" value="1"/>
</dbReference>
<dbReference type="Pfam" id="PF07733">
    <property type="entry name" value="DNA_pol3_alpha"/>
    <property type="match status" value="1"/>
</dbReference>
<dbReference type="Pfam" id="PF17657">
    <property type="entry name" value="DNA_pol3_finger"/>
    <property type="match status" value="1"/>
</dbReference>
<dbReference type="Pfam" id="PF14579">
    <property type="entry name" value="HHH_6"/>
    <property type="match status" value="1"/>
</dbReference>
<dbReference type="Pfam" id="PF02811">
    <property type="entry name" value="PHP"/>
    <property type="match status" value="1"/>
</dbReference>
<dbReference type="Pfam" id="PF01336">
    <property type="entry name" value="tRNA_anti-codon"/>
    <property type="match status" value="1"/>
</dbReference>
<dbReference type="SMART" id="SM00481">
    <property type="entry name" value="POLIIIAc"/>
    <property type="match status" value="1"/>
</dbReference>
<dbReference type="SUPFAM" id="SSF89550">
    <property type="entry name" value="PHP domain-like"/>
    <property type="match status" value="1"/>
</dbReference>
<name>DNAE2_RALPJ</name>
<proteinExistence type="inferred from homology"/>
<accession>B2UJ29</accession>
<keyword id="KW-0963">Cytoplasm</keyword>
<keyword id="KW-0227">DNA damage</keyword>
<keyword id="KW-0234">DNA repair</keyword>
<keyword id="KW-0235">DNA replication</keyword>
<keyword id="KW-0239">DNA-directed DNA polymerase</keyword>
<keyword id="KW-0548">Nucleotidyltransferase</keyword>
<keyword id="KW-0808">Transferase</keyword>
<protein>
    <recommendedName>
        <fullName evidence="1">Error-prone DNA polymerase</fullName>
        <ecNumber evidence="1">2.7.7.7</ecNumber>
    </recommendedName>
</protein>
<feature type="chain" id="PRO_1000188732" description="Error-prone DNA polymerase">
    <location>
        <begin position="1"/>
        <end position="1079"/>
    </location>
</feature>
<reference key="1">
    <citation type="submission" date="2008-05" db="EMBL/GenBank/DDBJ databases">
        <title>Complete sequence of chromosome 2 of Ralstonia pickettii 12J.</title>
        <authorList>
            <person name="Lucas S."/>
            <person name="Copeland A."/>
            <person name="Lapidus A."/>
            <person name="Glavina del Rio T."/>
            <person name="Dalin E."/>
            <person name="Tice H."/>
            <person name="Bruce D."/>
            <person name="Goodwin L."/>
            <person name="Pitluck S."/>
            <person name="Meincke L."/>
            <person name="Brettin T."/>
            <person name="Detter J.C."/>
            <person name="Han C."/>
            <person name="Kuske C.R."/>
            <person name="Schmutz J."/>
            <person name="Larimer F."/>
            <person name="Land M."/>
            <person name="Hauser L."/>
            <person name="Kyrpides N."/>
            <person name="Mikhailova N."/>
            <person name="Marsh T."/>
            <person name="Richardson P."/>
        </authorList>
    </citation>
    <scope>NUCLEOTIDE SEQUENCE [LARGE SCALE GENOMIC DNA]</scope>
    <source>
        <strain>12J</strain>
    </source>
</reference>
<evidence type="ECO:0000255" key="1">
    <source>
        <dbReference type="HAMAP-Rule" id="MF_01902"/>
    </source>
</evidence>
<comment type="function">
    <text evidence="1">DNA polymerase involved in damage-induced mutagenesis and translesion synthesis (TLS). It is not the major replicative DNA polymerase.</text>
</comment>
<comment type="catalytic activity">
    <reaction evidence="1">
        <text>DNA(n) + a 2'-deoxyribonucleoside 5'-triphosphate = DNA(n+1) + diphosphate</text>
        <dbReference type="Rhea" id="RHEA:22508"/>
        <dbReference type="Rhea" id="RHEA-COMP:17339"/>
        <dbReference type="Rhea" id="RHEA-COMP:17340"/>
        <dbReference type="ChEBI" id="CHEBI:33019"/>
        <dbReference type="ChEBI" id="CHEBI:61560"/>
        <dbReference type="ChEBI" id="CHEBI:173112"/>
        <dbReference type="EC" id="2.7.7.7"/>
    </reaction>
</comment>
<comment type="subcellular location">
    <subcellularLocation>
        <location evidence="1">Cytoplasm</location>
    </subcellularLocation>
</comment>
<comment type="similarity">
    <text evidence="1">Belongs to the DNA polymerase type-C family. DnaE2 subfamily.</text>
</comment>